<sequence>MAPTRRSRDLLRGKNVLIIGGTSGIGFAVAQLVIEHGAMACIAGSNPTKLGKALDALKQHPDRDPIAIVQSATCDLFDVPNLEQNLDNLLKLAAGDSKIHHIVFTAADMVQPPPLASVTIEQIQRVGTIRFTAPMLVAKLLPKYMELCPENSYTLTSGSHAKQPDPGWSLVTGYCGGVEGLMRGLAVDMMPLRVNVVSPGAVLTPVLRDILGDSLEIALDAARKKSTTGRIARPEDVAEAYLYIMKDQNITGTVLETSAGMLLR</sequence>
<organism>
    <name type="scientific">Malbranchea aurantiaca</name>
    <dbReference type="NCBI Taxonomy" id="78605"/>
    <lineage>
        <taxon>Eukaryota</taxon>
        <taxon>Fungi</taxon>
        <taxon>Dikarya</taxon>
        <taxon>Ascomycota</taxon>
        <taxon>Pezizomycotina</taxon>
        <taxon>Eurotiomycetes</taxon>
        <taxon>Eurotiomycetidae</taxon>
        <taxon>Onygenales</taxon>
        <taxon>Malbrancheaceae</taxon>
        <taxon>Malbranchea</taxon>
    </lineage>
</organism>
<evidence type="ECO:0000250" key="1">
    <source>
        <dbReference type="UniProtKB" id="L0E2Z4"/>
    </source>
</evidence>
<evidence type="ECO:0000250" key="2">
    <source>
        <dbReference type="UniProtKB" id="O93868"/>
    </source>
</evidence>
<evidence type="ECO:0000255" key="3"/>
<evidence type="ECO:0000255" key="4">
    <source>
        <dbReference type="PROSITE-ProRule" id="PRU00498"/>
    </source>
</evidence>
<evidence type="ECO:0000269" key="5">
    <source>
    </source>
</evidence>
<evidence type="ECO:0000269" key="6">
    <source>
    </source>
</evidence>
<evidence type="ECO:0000269" key="7">
    <source>
    </source>
</evidence>
<evidence type="ECO:0000269" key="8">
    <source>
    </source>
</evidence>
<evidence type="ECO:0000269" key="9">
    <source>
    </source>
</evidence>
<evidence type="ECO:0000269" key="10">
    <source>
    </source>
</evidence>
<evidence type="ECO:0000269" key="11">
    <source>
    </source>
</evidence>
<evidence type="ECO:0000303" key="12">
    <source>
    </source>
</evidence>
<evidence type="ECO:0000305" key="13"/>
<evidence type="ECO:0007829" key="14">
    <source>
        <dbReference type="PDB" id="6NKH"/>
    </source>
</evidence>
<dbReference type="EC" id="1.1.-.-" evidence="11"/>
<dbReference type="EMBL" id="JQ708193">
    <property type="protein sequence ID" value="AGA37263.1"/>
    <property type="molecule type" value="Genomic_DNA"/>
</dbReference>
<dbReference type="PDB" id="6NKH">
    <property type="method" value="X-ray"/>
    <property type="resolution" value="1.60 A"/>
    <property type="chains" value="A/B/C/D=1-264"/>
</dbReference>
<dbReference type="PDBsum" id="6NKH"/>
<dbReference type="SMR" id="L0E4F8"/>
<dbReference type="GlyCosmos" id="L0E4F8">
    <property type="glycosylation" value="1 site, No reported glycans"/>
</dbReference>
<dbReference type="BioCyc" id="MetaCyc:MONOMER-21925"/>
<dbReference type="GO" id="GO:0016020">
    <property type="term" value="C:membrane"/>
    <property type="evidence" value="ECO:0007669"/>
    <property type="project" value="UniProtKB-SubCell"/>
</dbReference>
<dbReference type="GO" id="GO:0016491">
    <property type="term" value="F:oxidoreductase activity"/>
    <property type="evidence" value="ECO:0007669"/>
    <property type="project" value="UniProtKB-KW"/>
</dbReference>
<dbReference type="CDD" id="cd05233">
    <property type="entry name" value="SDR_c"/>
    <property type="match status" value="1"/>
</dbReference>
<dbReference type="Gene3D" id="3.40.50.720">
    <property type="entry name" value="NAD(P)-binding Rossmann-like Domain"/>
    <property type="match status" value="1"/>
</dbReference>
<dbReference type="InterPro" id="IPR036291">
    <property type="entry name" value="NAD(P)-bd_dom_sf"/>
</dbReference>
<dbReference type="InterPro" id="IPR002347">
    <property type="entry name" value="SDR_fam"/>
</dbReference>
<dbReference type="InterPro" id="IPR051122">
    <property type="entry name" value="SDR_superfamily_enzyme"/>
</dbReference>
<dbReference type="PANTHER" id="PTHR43477">
    <property type="entry name" value="DIHYDROANTICAPSIN 7-DEHYDROGENASE"/>
    <property type="match status" value="1"/>
</dbReference>
<dbReference type="PANTHER" id="PTHR43477:SF1">
    <property type="entry name" value="DIHYDROANTICAPSIN 7-DEHYDROGENASE"/>
    <property type="match status" value="1"/>
</dbReference>
<dbReference type="Pfam" id="PF23441">
    <property type="entry name" value="SDR"/>
    <property type="match status" value="1"/>
</dbReference>
<dbReference type="PRINTS" id="PR00081">
    <property type="entry name" value="GDHRDH"/>
</dbReference>
<dbReference type="SUPFAM" id="SSF51735">
    <property type="entry name" value="NAD(P)-binding Rossmann-fold domains"/>
    <property type="match status" value="1"/>
</dbReference>
<feature type="chain" id="PRO_0000448776" description="Short-chain dehydrogenase/reductase malC">
    <location>
        <begin position="1"/>
        <end position="264"/>
    </location>
</feature>
<feature type="transmembrane region" description="Helical" evidence="3">
    <location>
        <begin position="13"/>
        <end position="35"/>
    </location>
</feature>
<feature type="binding site" evidence="1">
    <location>
        <position position="22"/>
    </location>
    <ligand>
        <name>NADP(+)</name>
        <dbReference type="ChEBI" id="CHEBI:58349"/>
    </ligand>
</feature>
<feature type="binding site" evidence="1">
    <location>
        <position position="23"/>
    </location>
    <ligand>
        <name>NADP(+)</name>
        <dbReference type="ChEBI" id="CHEBI:58349"/>
    </ligand>
</feature>
<feature type="binding site" evidence="1">
    <location>
        <position position="25"/>
    </location>
    <ligand>
        <name>NADP(+)</name>
        <dbReference type="ChEBI" id="CHEBI:58349"/>
    </ligand>
</feature>
<feature type="binding site" evidence="1">
    <location>
        <position position="45"/>
    </location>
    <ligand>
        <name>NADP(+)</name>
        <dbReference type="ChEBI" id="CHEBI:58349"/>
    </ligand>
</feature>
<feature type="binding site" evidence="1">
    <location>
        <position position="46"/>
    </location>
    <ligand>
        <name>NADP(+)</name>
        <dbReference type="ChEBI" id="CHEBI:58349"/>
    </ligand>
</feature>
<feature type="binding site" evidence="1">
    <location>
        <position position="49"/>
    </location>
    <ligand>
        <name>NADP(+)</name>
        <dbReference type="ChEBI" id="CHEBI:58349"/>
    </ligand>
</feature>
<feature type="binding site" evidence="1">
    <location>
        <position position="75"/>
    </location>
    <ligand>
        <name>NADP(+)</name>
        <dbReference type="ChEBI" id="CHEBI:58349"/>
    </ligand>
</feature>
<feature type="binding site" evidence="2">
    <location>
        <position position="88"/>
    </location>
    <ligand>
        <name>NADP(+)</name>
        <dbReference type="ChEBI" id="CHEBI:58349"/>
    </ligand>
</feature>
<feature type="binding site" evidence="1">
    <location>
        <position position="130"/>
    </location>
    <ligand>
        <name>NADP(+)</name>
        <dbReference type="ChEBI" id="CHEBI:58349"/>
    </ligand>
</feature>
<feature type="binding site" evidence="2">
    <location>
        <position position="202"/>
    </location>
    <ligand>
        <name>NADP(+)</name>
        <dbReference type="ChEBI" id="CHEBI:58349"/>
    </ligand>
</feature>
<feature type="binding site" evidence="1">
    <location>
        <position position="204"/>
    </location>
    <ligand>
        <name>NADP(+)</name>
        <dbReference type="ChEBI" id="CHEBI:58349"/>
    </ligand>
</feature>
<feature type="glycosylation site" description="N-linked (GlcNAc...) asparagine" evidence="4">
    <location>
        <position position="249"/>
    </location>
</feature>
<feature type="helix" evidence="14">
    <location>
        <begin position="5"/>
        <end position="11"/>
    </location>
</feature>
<feature type="strand" evidence="14">
    <location>
        <begin position="15"/>
        <end position="19"/>
    </location>
</feature>
<feature type="helix" evidence="14">
    <location>
        <begin position="24"/>
        <end position="35"/>
    </location>
</feature>
<feature type="strand" evidence="14">
    <location>
        <begin position="39"/>
        <end position="45"/>
    </location>
</feature>
<feature type="helix" evidence="14">
    <location>
        <begin position="47"/>
        <end position="58"/>
    </location>
</feature>
<feature type="strand" evidence="14">
    <location>
        <begin position="69"/>
        <end position="73"/>
    </location>
</feature>
<feature type="helix" evidence="14">
    <location>
        <begin position="79"/>
        <end position="94"/>
    </location>
</feature>
<feature type="strand" evidence="14">
    <location>
        <begin position="101"/>
        <end position="104"/>
    </location>
</feature>
<feature type="helix" evidence="14">
    <location>
        <begin position="115"/>
        <end position="117"/>
    </location>
</feature>
<feature type="helix" evidence="14">
    <location>
        <begin position="120"/>
        <end position="130"/>
    </location>
</feature>
<feature type="helix" evidence="14">
    <location>
        <begin position="132"/>
        <end position="140"/>
    </location>
</feature>
<feature type="helix" evidence="14">
    <location>
        <begin position="141"/>
        <end position="143"/>
    </location>
</feature>
<feature type="strand" evidence="14">
    <location>
        <begin position="151"/>
        <end position="156"/>
    </location>
</feature>
<feature type="helix" evidence="14">
    <location>
        <begin position="159"/>
        <end position="161"/>
    </location>
</feature>
<feature type="helix" evidence="14">
    <location>
        <begin position="169"/>
        <end position="188"/>
    </location>
</feature>
<feature type="turn" evidence="14">
    <location>
        <begin position="189"/>
        <end position="191"/>
    </location>
</feature>
<feature type="strand" evidence="14">
    <location>
        <begin position="192"/>
        <end position="199"/>
    </location>
</feature>
<feature type="helix" evidence="14">
    <location>
        <begin position="205"/>
        <end position="211"/>
    </location>
</feature>
<feature type="helix" evidence="14">
    <location>
        <begin position="212"/>
        <end position="214"/>
    </location>
</feature>
<feature type="helix" evidence="14">
    <location>
        <begin position="215"/>
        <end position="225"/>
    </location>
</feature>
<feature type="helix" evidence="14">
    <location>
        <begin position="234"/>
        <end position="246"/>
    </location>
</feature>
<feature type="strand" evidence="14">
    <location>
        <begin position="254"/>
        <end position="258"/>
    </location>
</feature>
<feature type="helix" evidence="14">
    <location>
        <begin position="261"/>
        <end position="263"/>
    </location>
</feature>
<gene>
    <name evidence="12" type="primary">malC</name>
</gene>
<reference key="1">
    <citation type="journal article" date="2012" name="Med. Chem. Commun.">
        <title>Comparative analysis of the biosynthetic systems for fungal bicyclo[2.2.2]diazaoctane indole alkaloids: the (+)/(-)-notoamide, paraherquamide and malbrancheamide pathways.</title>
        <authorList>
            <person name="Li S."/>
            <person name="Anand K."/>
            <person name="Tran H."/>
            <person name="Yu F."/>
            <person name="Finefield J.M."/>
            <person name="Sunderhaus J.D."/>
            <person name="McAfoos T.J."/>
            <person name="Tsukamoto S."/>
            <person name="Williams R.M."/>
            <person name="Sherman D.H."/>
        </authorList>
    </citation>
    <scope>NUCLEOTIDE SEQUENCE [GENOMIC DNA]</scope>
    <scope>FUNCTION</scope>
    <source>
        <strain>RRC1813</strain>
    </source>
</reference>
<reference key="2">
    <citation type="journal article" date="2008" name="Bioorg. Med. Chem. Lett.">
        <title>Calmodulin inhibitory activity of the malbrancheamides and various analogs.</title>
        <authorList>
            <person name="Miller K.A."/>
            <person name="Figueroa M."/>
            <person name="Valente M.W."/>
            <person name="Greshock T.J."/>
            <person name="Mata R."/>
            <person name="Williams R.M."/>
        </authorList>
    </citation>
    <scope>BIOTECHNOLOGY</scope>
</reference>
<reference key="3">
    <citation type="journal article" date="2009" name="Anal. Biochem.">
        <title>An alternative assay to discover potential calmodulin inhibitors using a human fluorophore-labeled CaM protein.</title>
        <authorList>
            <person name="Gonzalez-Andrade M."/>
            <person name="Figueroa M."/>
            <person name="Rodriguez-Sotres R."/>
            <person name="Mata R."/>
            <person name="Sosa-Peinado A."/>
        </authorList>
    </citation>
    <scope>BIOTECHNOLOGY</scope>
</reference>
<reference key="4">
    <citation type="journal article" date="2011" name="J. Enzym. Inhib. Med. Chem.">
        <title>Fluorescence, circular dichroism, NMR, and docking studies of the interaction of the alkaloid malbrancheamide with calmodulin.</title>
        <authorList>
            <person name="Figueroa M."/>
            <person name="Gonzalez-Andrade M."/>
            <person name="Sosa-Peinado A."/>
            <person name="Madariaga-Mazon A."/>
            <person name="Del Rio-Portilla F."/>
            <person name="Gonzalez M.C."/>
            <person name="Mata R."/>
        </authorList>
    </citation>
    <scope>BIOTECHNOLOGY</scope>
</reference>
<reference key="5">
    <citation type="journal article" date="2015" name="J. Pharm. Pharmacol.">
        <title>Insights on the vasorelaxant mode of action of malbrancheamide.</title>
        <authorList>
            <person name="Madariaga-Mazon A."/>
            <person name="Hernandez-Abreu O."/>
            <person name="Estrada-Soto S."/>
            <person name="Mata R."/>
        </authorList>
    </citation>
    <scope>BIOTECHNOLOGY</scope>
</reference>
<reference key="6">
    <citation type="journal article" date="2017" name="J. Am. Chem. Soc.">
        <title>Function and structure of MalA/MalA', iterative halogenases for late-stage C-H functionalization of indole alkaloids.</title>
        <authorList>
            <person name="Fraley A.E."/>
            <person name="Garcia-Borras M."/>
            <person name="Tripathi A."/>
            <person name="Khare D."/>
            <person name="Mercado-Marin E.V."/>
            <person name="Tran H."/>
            <person name="Dan Q."/>
            <person name="Webb G.P."/>
            <person name="Watts K.R."/>
            <person name="Crews P."/>
            <person name="Sarpong R."/>
            <person name="Williams R.M."/>
            <person name="Smith J.L."/>
            <person name="Houk K.N."/>
            <person name="Sherman D.H."/>
        </authorList>
    </citation>
    <scope>FUNCTION</scope>
</reference>
<reference key="7">
    <citation type="journal article" date="2019" name="Nat. Chem.">
        <title>Fungal indole alkaloid biogenesis through evolution of a bifunctional reductase/Diels-Alderase.</title>
        <authorList>
            <person name="Dan Q."/>
            <person name="Newmister S.A."/>
            <person name="Klas K.R."/>
            <person name="Fraley A.E."/>
            <person name="McAfoos T.J."/>
            <person name="Somoza A.D."/>
            <person name="Sunderhaus J.D."/>
            <person name="Ye Y."/>
            <person name="Shende V.V."/>
            <person name="Yu F."/>
            <person name="Sanders J.N."/>
            <person name="Brown W.C."/>
            <person name="Zhao L."/>
            <person name="Paton R.S."/>
            <person name="Houk K.N."/>
            <person name="Smith J.L."/>
            <person name="Sherman D.H."/>
            <person name="Williams R.M."/>
        </authorList>
    </citation>
    <scope>X-RAY CRYSTALLOGRAPHY (1.6 ANGSTROMS)</scope>
    <scope>FUNCTION</scope>
    <scope>CATALYTIC ACTIVITY</scope>
    <scope>BIOPHYSICOCHEMICAL PROPERTIES</scope>
    <scope>PATHWAY</scope>
</reference>
<comment type="function">
    <text evidence="8 10 11">Short-chain dehydrogenase/reductase; part of the gene cluster that mediates the biosynthesis of malbrancheamide, a dichlorinated fungal indole alkaloid that belongs to a family of natural products containing a characteristic bicyclo[2.2.2]diazaoctane core (PubMed:23213353, PubMed:28777910, PubMed:31548667). The first step of malbrancheamide biosynthesis involves coupling of L-proline and L-tryptophan by malG, a bimodular NRPS, to produce L-Pro-L-Trp aldehyde through reductive offloading (PubMed:23213353, PubMed:31548667). This compound undergoes spontaneous cyclization and dehydration to give a dienamine which is reverse prenylated at C-2 by malE (PubMed:31548667). The other prenyltransferase present in the cluster, malB, displays modest activity, suggesting that may be a redundant gene in the pathway (PubMed:31548667). Subsequently, a [4+2] Diels-Alder cyclo-addition catalyzed by the bifunctional enzyme malC forms the characteristic bicyclo[2.2.2]diazaoctane ring of premalbrancheamid (PubMed:31548667). The first reaction catalyzed is a NADPH-dependent reduction reaction in which the nicotinamide cofactor is a stoichiometric reagent (PubMed:31548667). Either NADH or NADPH is effective as a cofactor (PubMed:31548667). NADP(+) is required for stereocontrolled formation of premalbrancheamide, however it does not appear to be required as a formal stoichiometric reagent because the second reaction performed by malC, the [4+2] cycloaddition, is a balanced chemical reaction without requirement for hydride transfer to balance the reaction (PubMed:31548667). Finally, the flavin-dependent halogenase malA catalyzes the iterative dichlorination of the indole ring of premalbrancheamide to yield C-9 monochlorinated malbrancheamide B, C-8 monochlorinated isomalbrancheamide B, and dichlorinated malbrancheamide (PubMed:28777910, PubMed:31548667). MalA is also able to brominate premalbrancheamide at C-9 to yield malbrancheamide C, and, to a lesser extend, at C-8 to yield isomalbrancheamide C (PubMed:28777910). Finally, malA can brominate C-9 monochlorinated malbrancheamide B at C-8 to yield malbrancheamide D, or C-8 monochlorinated isomalbrancheamide B at C-9 to produce isomalbrancheamide D (PubMed:28777910).</text>
</comment>
<comment type="catalytic activity">
    <reaction evidence="11">
        <text>1-hydroxy-3-{[2-(1,1-dimethylallyl)-indol-3-yl]methyl}-6H,7H,8H-5lambda(5)-pyrrolo[1,2-a]pyrazine + NADPH + H(+) = 1-hydroxy-3-{[2-(1,1-dimethylallyl)-indol-3-yl]methyl}-4H,6H,7H,8H-pyrrolo[1,2-a]pyrazine + NADP(+)</text>
        <dbReference type="Rhea" id="RHEA:62300"/>
        <dbReference type="ChEBI" id="CHEBI:15378"/>
        <dbReference type="ChEBI" id="CHEBI:57783"/>
        <dbReference type="ChEBI" id="CHEBI:58349"/>
        <dbReference type="ChEBI" id="CHEBI:145657"/>
        <dbReference type="ChEBI" id="CHEBI:145675"/>
    </reaction>
    <physiologicalReaction direction="left-to-right" evidence="11">
        <dbReference type="Rhea" id="RHEA:62301"/>
    </physiologicalReaction>
</comment>
<comment type="catalytic activity">
    <reaction evidence="11">
        <text>1-hydroxy-3-{[2-(1,1-dimethylallyl)-indol-3-yl]methyl}-4H,6H,7H,8H-pyrrolo[1,2-a]pyrazine = (+)-premalbrancheamide</text>
        <dbReference type="Rhea" id="RHEA:62304"/>
        <dbReference type="ChEBI" id="CHEBI:145658"/>
        <dbReference type="ChEBI" id="CHEBI:145675"/>
    </reaction>
    <physiologicalReaction direction="left-to-right" evidence="11">
        <dbReference type="Rhea" id="RHEA:62305"/>
    </physiologicalReaction>
</comment>
<comment type="biophysicochemical properties">
    <kinetics>
        <KM evidence="11">16 uM for NADPH</KM>
        <KM evidence="11">93 uM for NADH</KM>
    </kinetics>
</comment>
<comment type="pathway">
    <text evidence="11">Alkaloid biosynthesis.</text>
</comment>
<comment type="subcellular location">
    <subcellularLocation>
        <location evidence="3">Membrane</location>
        <topology evidence="3">Single-pass membrane protein</topology>
    </subcellularLocation>
</comment>
<comment type="biotechnology">
    <text evidence="5 6 7 9">Malbrancheamides have the ability to inhibit calmodulin, calmodulin-dependent phosphodiesterase (PDE1), and induce both endothelium-independent and endothelium-dependent relaxant effects, suggesting their potential as vasorelaxant agents.</text>
</comment>
<comment type="similarity">
    <text evidence="13">Belongs to the short-chain dehydrogenases/reductases (SDR) family.</text>
</comment>
<comment type="caution">
    <text evidence="11">MalC lacks the characteristic Tyr and Lys catalytic amino acids, and also the essential Asn and Ser residues of typical SDR family proteins, suggesting that the active site is reconfigured to fit its unique catalytic roles.</text>
</comment>
<keyword id="KW-0002">3D-structure</keyword>
<keyword id="KW-0325">Glycoprotein</keyword>
<keyword id="KW-0472">Membrane</keyword>
<keyword id="KW-0521">NADP</keyword>
<keyword id="KW-0560">Oxidoreductase</keyword>
<keyword id="KW-0812">Transmembrane</keyword>
<keyword id="KW-1133">Transmembrane helix</keyword>
<name>MALC_MALAU</name>
<protein>
    <recommendedName>
        <fullName evidence="12">Short-chain dehydrogenase/reductase malC</fullName>
        <ecNumber evidence="11">1.1.-.-</ecNumber>
    </recommendedName>
    <alternativeName>
        <fullName evidence="12">Malbrancheamide biosynthesis cluster protein C</fullName>
    </alternativeName>
</protein>
<accession>L0E4F8</accession>
<proteinExistence type="evidence at protein level"/>